<protein>
    <recommendedName>
        <fullName>Endo-1,4-beta-xylanase 4</fullName>
        <shortName>Xylanase 4</shortName>
        <ecNumber>3.2.1.8</ecNumber>
    </recommendedName>
    <alternativeName>
        <fullName>1,4-beta-D-xylan xylanohydrolase 4</fullName>
    </alternativeName>
</protein>
<comment type="function">
    <text evidence="1">Endo-1,4-beta-xylanase involved in the hydrolysis of xylan, a major structural heterogeneous polysaccharide found in plant biomass representing the second most abundant polysaccharide in the biosphere, after cellulose.</text>
</comment>
<comment type="catalytic activity">
    <reaction>
        <text>Endohydrolysis of (1-&gt;4)-beta-D-xylosidic linkages in xylans.</text>
        <dbReference type="EC" id="3.2.1.8"/>
    </reaction>
</comment>
<comment type="pathway">
    <text>Glycan degradation; xylan degradation.</text>
</comment>
<comment type="subcellular location">
    <subcellularLocation>
        <location evidence="1">Secreted</location>
    </subcellularLocation>
</comment>
<comment type="similarity">
    <text evidence="6">Belongs to the glycosyl hydrolase 11 (cellulase G) family.</text>
</comment>
<dbReference type="EC" id="3.2.1.8"/>
<dbReference type="EMBL" id="CM001234">
    <property type="protein sequence ID" value="EHA49604.1"/>
    <property type="molecule type" value="Genomic_DNA"/>
</dbReference>
<dbReference type="RefSeq" id="XP_003715923.1">
    <property type="nucleotide sequence ID" value="XM_003715875.1"/>
</dbReference>
<dbReference type="SMR" id="G4NA54"/>
<dbReference type="STRING" id="242507.G4NA54"/>
<dbReference type="CAZy" id="GH11">
    <property type="family name" value="Glycoside Hydrolase Family 11"/>
</dbReference>
<dbReference type="GlyCosmos" id="G4NA54">
    <property type="glycosylation" value="1 site, No reported glycans"/>
</dbReference>
<dbReference type="EnsemblFungi" id="MGG_08424T0">
    <property type="protein sequence ID" value="MGG_08424T0"/>
    <property type="gene ID" value="MGG_08424"/>
</dbReference>
<dbReference type="GeneID" id="2678666"/>
<dbReference type="KEGG" id="mgr:MGG_08424"/>
<dbReference type="VEuPathDB" id="FungiDB:MGG_08424"/>
<dbReference type="eggNOG" id="ENOG502RXA7">
    <property type="taxonomic scope" value="Eukaryota"/>
</dbReference>
<dbReference type="HOGENOM" id="CLU_052631_0_0_1"/>
<dbReference type="InParanoid" id="G4NA54"/>
<dbReference type="OMA" id="THFDAWA"/>
<dbReference type="OrthoDB" id="2115822at2759"/>
<dbReference type="UniPathway" id="UPA00114"/>
<dbReference type="PHI-base" id="PHI:123401"/>
<dbReference type="PHI-base" id="PHI:2214"/>
<dbReference type="Proteomes" id="UP000009058">
    <property type="component" value="Chromosome 4"/>
</dbReference>
<dbReference type="GO" id="GO:0005576">
    <property type="term" value="C:extracellular region"/>
    <property type="evidence" value="ECO:0007669"/>
    <property type="project" value="UniProtKB-SubCell"/>
</dbReference>
<dbReference type="GO" id="GO:0031176">
    <property type="term" value="F:endo-1,4-beta-xylanase activity"/>
    <property type="evidence" value="ECO:0007669"/>
    <property type="project" value="UniProtKB-EC"/>
</dbReference>
<dbReference type="GO" id="GO:0045493">
    <property type="term" value="P:xylan catabolic process"/>
    <property type="evidence" value="ECO:0007669"/>
    <property type="project" value="UniProtKB-UniPathway"/>
</dbReference>
<dbReference type="FunFam" id="2.60.120.180:FF:000001">
    <property type="entry name" value="Endo-1,4-beta-xylanase"/>
    <property type="match status" value="1"/>
</dbReference>
<dbReference type="Gene3D" id="2.60.120.180">
    <property type="match status" value="1"/>
</dbReference>
<dbReference type="InterPro" id="IPR013320">
    <property type="entry name" value="ConA-like_dom_sf"/>
</dbReference>
<dbReference type="InterPro" id="IPR013319">
    <property type="entry name" value="GH11/12"/>
</dbReference>
<dbReference type="InterPro" id="IPR018208">
    <property type="entry name" value="GH11_AS_1"/>
</dbReference>
<dbReference type="InterPro" id="IPR033119">
    <property type="entry name" value="GH11_AS_2"/>
</dbReference>
<dbReference type="InterPro" id="IPR033123">
    <property type="entry name" value="GH11_dom"/>
</dbReference>
<dbReference type="InterPro" id="IPR001137">
    <property type="entry name" value="Glyco_hydro_11"/>
</dbReference>
<dbReference type="PANTHER" id="PTHR46828:SF3">
    <property type="entry name" value="ENDO-1,4-BETA-XYLANASE"/>
    <property type="match status" value="1"/>
</dbReference>
<dbReference type="PANTHER" id="PTHR46828">
    <property type="entry name" value="ENDO-1,4-BETA-XYLANASE A-RELATED"/>
    <property type="match status" value="1"/>
</dbReference>
<dbReference type="Pfam" id="PF00457">
    <property type="entry name" value="Glyco_hydro_11"/>
    <property type="match status" value="1"/>
</dbReference>
<dbReference type="PRINTS" id="PR00911">
    <property type="entry name" value="GLHYDRLASE11"/>
</dbReference>
<dbReference type="SUPFAM" id="SSF49899">
    <property type="entry name" value="Concanavalin A-like lectins/glucanases"/>
    <property type="match status" value="1"/>
</dbReference>
<dbReference type="PROSITE" id="PS00776">
    <property type="entry name" value="GH11_1"/>
    <property type="match status" value="1"/>
</dbReference>
<dbReference type="PROSITE" id="PS00777">
    <property type="entry name" value="GH11_2"/>
    <property type="match status" value="1"/>
</dbReference>
<dbReference type="PROSITE" id="PS51761">
    <property type="entry name" value="GH11_3"/>
    <property type="match status" value="1"/>
</dbReference>
<evidence type="ECO:0000250" key="1"/>
<evidence type="ECO:0000255" key="2"/>
<evidence type="ECO:0000255" key="3">
    <source>
        <dbReference type="PROSITE-ProRule" id="PRU01097"/>
    </source>
</evidence>
<evidence type="ECO:0000255" key="4">
    <source>
        <dbReference type="PROSITE-ProRule" id="PRU10062"/>
    </source>
</evidence>
<evidence type="ECO:0000255" key="5">
    <source>
        <dbReference type="PROSITE-ProRule" id="PRU10063"/>
    </source>
</evidence>
<evidence type="ECO:0000305" key="6"/>
<name>XYN4_PYRO7</name>
<organism>
    <name type="scientific">Pyricularia oryzae (strain 70-15 / ATCC MYA-4617 / FGSC 8958)</name>
    <name type="common">Rice blast fungus</name>
    <name type="synonym">Magnaporthe oryzae</name>
    <dbReference type="NCBI Taxonomy" id="242507"/>
    <lineage>
        <taxon>Eukaryota</taxon>
        <taxon>Fungi</taxon>
        <taxon>Dikarya</taxon>
        <taxon>Ascomycota</taxon>
        <taxon>Pezizomycotina</taxon>
        <taxon>Sordariomycetes</taxon>
        <taxon>Sordariomycetidae</taxon>
        <taxon>Magnaporthales</taxon>
        <taxon>Pyriculariaceae</taxon>
        <taxon>Pyricularia</taxon>
    </lineage>
</organism>
<keyword id="KW-0119">Carbohydrate metabolism</keyword>
<keyword id="KW-0325">Glycoprotein</keyword>
<keyword id="KW-0326">Glycosidase</keyword>
<keyword id="KW-0378">Hydrolase</keyword>
<keyword id="KW-0624">Polysaccharide degradation</keyword>
<keyword id="KW-1185">Reference proteome</keyword>
<keyword id="KW-0964">Secreted</keyword>
<keyword id="KW-0732">Signal</keyword>
<keyword id="KW-0858">Xylan degradation</keyword>
<feature type="signal peptide" evidence="2">
    <location>
        <begin position="1"/>
        <end position="18"/>
    </location>
</feature>
<feature type="chain" id="PRO_0000429623" description="Endo-1,4-beta-xylanase 4">
    <location>
        <begin position="19"/>
        <end position="231"/>
    </location>
</feature>
<feature type="domain" description="GH11" evidence="3">
    <location>
        <begin position="42"/>
        <end position="230"/>
    </location>
</feature>
<feature type="active site" description="Nucleophile" evidence="4">
    <location>
        <position position="126"/>
    </location>
</feature>
<feature type="active site" description="Proton donor" evidence="5">
    <location>
        <position position="217"/>
    </location>
</feature>
<feature type="glycosylation site" description="N-linked (GlcNAc...) asparagine" evidence="2">
    <location>
        <position position="99"/>
    </location>
</feature>
<sequence>MVSFTTILVAATAALVAANPVPPSIDEMREIYVKSRDLHARGGTPSSTGTHDGFYYSWWTDNGAQATYTNNAGGSYSITWSGNGNLVGGKGWNPGSARNVTYSANYRPNGNSYLSVYGWTRNPLVEYYVVENFGTYDPSSQASRKGTINVDGATYQVAQSTRTNQPSIDGTRTFQQYWSVRQQKRSSGTVDMKKHFDAWASMGMKLGTHDYQIVATEGYFSSGSSTVTIQR</sequence>
<reference key="1">
    <citation type="journal article" date="2005" name="Nature">
        <title>The genome sequence of the rice blast fungus Magnaporthe grisea.</title>
        <authorList>
            <person name="Dean R.A."/>
            <person name="Talbot N.J."/>
            <person name="Ebbole D.J."/>
            <person name="Farman M.L."/>
            <person name="Mitchell T.K."/>
            <person name="Orbach M.J."/>
            <person name="Thon M.R."/>
            <person name="Kulkarni R."/>
            <person name="Xu J.-R."/>
            <person name="Pan H."/>
            <person name="Read N.D."/>
            <person name="Lee Y.-H."/>
            <person name="Carbone I."/>
            <person name="Brown D."/>
            <person name="Oh Y.Y."/>
            <person name="Donofrio N."/>
            <person name="Jeong J.S."/>
            <person name="Soanes D.M."/>
            <person name="Djonovic S."/>
            <person name="Kolomiets E."/>
            <person name="Rehmeyer C."/>
            <person name="Li W."/>
            <person name="Harding M."/>
            <person name="Kim S."/>
            <person name="Lebrun M.-H."/>
            <person name="Bohnert H."/>
            <person name="Coughlan S."/>
            <person name="Butler J."/>
            <person name="Calvo S.E."/>
            <person name="Ma L.-J."/>
            <person name="Nicol R."/>
            <person name="Purcell S."/>
            <person name="Nusbaum C."/>
            <person name="Galagan J.E."/>
            <person name="Birren B.W."/>
        </authorList>
    </citation>
    <scope>NUCLEOTIDE SEQUENCE [LARGE SCALE GENOMIC DNA]</scope>
    <source>
        <strain>70-15 / ATCC MYA-4617 / FGSC 8958</strain>
    </source>
</reference>
<proteinExistence type="inferred from homology"/>
<accession>G4NA54</accession>
<gene>
    <name type="primary">XYL4</name>
    <name type="ORF">MGG_08424</name>
</gene>